<protein>
    <recommendedName>
        <fullName evidence="1">Pyridoxal 5'-phosphate synthase subunit PdxT</fullName>
        <ecNumber evidence="1">4.3.3.6</ecNumber>
    </recommendedName>
    <alternativeName>
        <fullName evidence="1">Pdx2</fullName>
    </alternativeName>
    <alternativeName>
        <fullName evidence="1">Pyridoxal 5'-phosphate synthase glutaminase subunit</fullName>
        <ecNumber evidence="1">3.5.1.2</ecNumber>
    </alternativeName>
</protein>
<comment type="function">
    <text evidence="1">Catalyzes the hydrolysis of glutamine to glutamate and ammonia as part of the biosynthesis of pyridoxal 5'-phosphate. The resulting ammonia molecule is channeled to the active site of PdxS.</text>
</comment>
<comment type="catalytic activity">
    <reaction evidence="1">
        <text>aldehydo-D-ribose 5-phosphate + D-glyceraldehyde 3-phosphate + L-glutamine = pyridoxal 5'-phosphate + L-glutamate + phosphate + 3 H2O + H(+)</text>
        <dbReference type="Rhea" id="RHEA:31507"/>
        <dbReference type="ChEBI" id="CHEBI:15377"/>
        <dbReference type="ChEBI" id="CHEBI:15378"/>
        <dbReference type="ChEBI" id="CHEBI:29985"/>
        <dbReference type="ChEBI" id="CHEBI:43474"/>
        <dbReference type="ChEBI" id="CHEBI:58273"/>
        <dbReference type="ChEBI" id="CHEBI:58359"/>
        <dbReference type="ChEBI" id="CHEBI:59776"/>
        <dbReference type="ChEBI" id="CHEBI:597326"/>
        <dbReference type="EC" id="4.3.3.6"/>
    </reaction>
</comment>
<comment type="catalytic activity">
    <reaction evidence="1">
        <text>L-glutamine + H2O = L-glutamate + NH4(+)</text>
        <dbReference type="Rhea" id="RHEA:15889"/>
        <dbReference type="ChEBI" id="CHEBI:15377"/>
        <dbReference type="ChEBI" id="CHEBI:28938"/>
        <dbReference type="ChEBI" id="CHEBI:29985"/>
        <dbReference type="ChEBI" id="CHEBI:58359"/>
        <dbReference type="EC" id="3.5.1.2"/>
    </reaction>
</comment>
<comment type="pathway">
    <text evidence="1">Cofactor biosynthesis; pyridoxal 5'-phosphate biosynthesis.</text>
</comment>
<comment type="subunit">
    <text evidence="1">In the presence of PdxS, forms a dodecamer of heterodimers. Only shows activity in the heterodimer.</text>
</comment>
<comment type="similarity">
    <text evidence="1">Belongs to the glutaminase PdxT/SNO family.</text>
</comment>
<accession>A7NQB7</accession>
<organism>
    <name type="scientific">Roseiflexus castenholzii (strain DSM 13941 / HLO8)</name>
    <dbReference type="NCBI Taxonomy" id="383372"/>
    <lineage>
        <taxon>Bacteria</taxon>
        <taxon>Bacillati</taxon>
        <taxon>Chloroflexota</taxon>
        <taxon>Chloroflexia</taxon>
        <taxon>Chloroflexales</taxon>
        <taxon>Roseiflexineae</taxon>
        <taxon>Roseiflexaceae</taxon>
        <taxon>Roseiflexus</taxon>
    </lineage>
</organism>
<evidence type="ECO:0000255" key="1">
    <source>
        <dbReference type="HAMAP-Rule" id="MF_01615"/>
    </source>
</evidence>
<name>PDXT_ROSCS</name>
<gene>
    <name evidence="1" type="primary">pdxT</name>
    <name type="ordered locus">Rcas_3723</name>
</gene>
<keyword id="KW-0315">Glutamine amidotransferase</keyword>
<keyword id="KW-0378">Hydrolase</keyword>
<keyword id="KW-0456">Lyase</keyword>
<keyword id="KW-0663">Pyridoxal phosphate</keyword>
<keyword id="KW-1185">Reference proteome</keyword>
<sequence length="189" mass="21062">MTVGILALQGDFREHEEMLRRIGAPTLQVRLPKHLDRVERLIIPGGESTTIGKLLAMYGLIEPLRARVREGMPIWGTCAGAILMAQRIADGRADQPSLRLMAVTARRNAFGSQLESFEIDLPVEALGGESLRMVFIRAPVLEDLGDDVTPLARLEDGRVVAARQANMLATCFHPELTSDERMHRYFLEM</sequence>
<dbReference type="EC" id="4.3.3.6" evidence="1"/>
<dbReference type="EC" id="3.5.1.2" evidence="1"/>
<dbReference type="EMBL" id="CP000804">
    <property type="protein sequence ID" value="ABU59763.1"/>
    <property type="molecule type" value="Genomic_DNA"/>
</dbReference>
<dbReference type="RefSeq" id="WP_012122186.1">
    <property type="nucleotide sequence ID" value="NC_009767.1"/>
</dbReference>
<dbReference type="SMR" id="A7NQB7"/>
<dbReference type="STRING" id="383372.Rcas_3723"/>
<dbReference type="KEGG" id="rca:Rcas_3723"/>
<dbReference type="eggNOG" id="COG0311">
    <property type="taxonomic scope" value="Bacteria"/>
</dbReference>
<dbReference type="HOGENOM" id="CLU_069674_2_0_0"/>
<dbReference type="OrthoDB" id="9810320at2"/>
<dbReference type="UniPathway" id="UPA00245"/>
<dbReference type="Proteomes" id="UP000000263">
    <property type="component" value="Chromosome"/>
</dbReference>
<dbReference type="GO" id="GO:0005829">
    <property type="term" value="C:cytosol"/>
    <property type="evidence" value="ECO:0007669"/>
    <property type="project" value="TreeGrafter"/>
</dbReference>
<dbReference type="GO" id="GO:1903600">
    <property type="term" value="C:glutaminase complex"/>
    <property type="evidence" value="ECO:0007669"/>
    <property type="project" value="TreeGrafter"/>
</dbReference>
<dbReference type="GO" id="GO:0004359">
    <property type="term" value="F:glutaminase activity"/>
    <property type="evidence" value="ECO:0007669"/>
    <property type="project" value="UniProtKB-UniRule"/>
</dbReference>
<dbReference type="GO" id="GO:0036381">
    <property type="term" value="F:pyridoxal 5'-phosphate synthase (glutamine hydrolysing) activity"/>
    <property type="evidence" value="ECO:0007669"/>
    <property type="project" value="UniProtKB-UniRule"/>
</dbReference>
<dbReference type="GO" id="GO:0006543">
    <property type="term" value="P:glutamine catabolic process"/>
    <property type="evidence" value="ECO:0007669"/>
    <property type="project" value="UniProtKB-UniRule"/>
</dbReference>
<dbReference type="GO" id="GO:0042823">
    <property type="term" value="P:pyridoxal phosphate biosynthetic process"/>
    <property type="evidence" value="ECO:0007669"/>
    <property type="project" value="UniProtKB-UniRule"/>
</dbReference>
<dbReference type="GO" id="GO:0008614">
    <property type="term" value="P:pyridoxine metabolic process"/>
    <property type="evidence" value="ECO:0007669"/>
    <property type="project" value="TreeGrafter"/>
</dbReference>
<dbReference type="CDD" id="cd01749">
    <property type="entry name" value="GATase1_PB"/>
    <property type="match status" value="1"/>
</dbReference>
<dbReference type="FunFam" id="3.40.50.880:FF:000010">
    <property type="entry name" value="uncharacterized protein LOC100176842 isoform X2"/>
    <property type="match status" value="1"/>
</dbReference>
<dbReference type="Gene3D" id="3.40.50.880">
    <property type="match status" value="1"/>
</dbReference>
<dbReference type="HAMAP" id="MF_01615">
    <property type="entry name" value="PdxT"/>
    <property type="match status" value="1"/>
</dbReference>
<dbReference type="InterPro" id="IPR029062">
    <property type="entry name" value="Class_I_gatase-like"/>
</dbReference>
<dbReference type="InterPro" id="IPR002161">
    <property type="entry name" value="PdxT/SNO"/>
</dbReference>
<dbReference type="InterPro" id="IPR021196">
    <property type="entry name" value="PdxT/SNO_CS"/>
</dbReference>
<dbReference type="NCBIfam" id="TIGR03800">
    <property type="entry name" value="PLP_synth_Pdx2"/>
    <property type="match status" value="1"/>
</dbReference>
<dbReference type="PANTHER" id="PTHR31559">
    <property type="entry name" value="PYRIDOXAL 5'-PHOSPHATE SYNTHASE SUBUNIT SNO"/>
    <property type="match status" value="1"/>
</dbReference>
<dbReference type="PANTHER" id="PTHR31559:SF0">
    <property type="entry name" value="PYRIDOXAL 5'-PHOSPHATE SYNTHASE SUBUNIT SNO1-RELATED"/>
    <property type="match status" value="1"/>
</dbReference>
<dbReference type="Pfam" id="PF01174">
    <property type="entry name" value="SNO"/>
    <property type="match status" value="1"/>
</dbReference>
<dbReference type="PIRSF" id="PIRSF005639">
    <property type="entry name" value="Glut_amidoT_SNO"/>
    <property type="match status" value="1"/>
</dbReference>
<dbReference type="SUPFAM" id="SSF52317">
    <property type="entry name" value="Class I glutamine amidotransferase-like"/>
    <property type="match status" value="1"/>
</dbReference>
<dbReference type="PROSITE" id="PS01236">
    <property type="entry name" value="PDXT_SNO_1"/>
    <property type="match status" value="1"/>
</dbReference>
<dbReference type="PROSITE" id="PS51130">
    <property type="entry name" value="PDXT_SNO_2"/>
    <property type="match status" value="1"/>
</dbReference>
<reference key="1">
    <citation type="submission" date="2007-08" db="EMBL/GenBank/DDBJ databases">
        <title>Complete sequence of Roseiflexus castenholzii DSM 13941.</title>
        <authorList>
            <consortium name="US DOE Joint Genome Institute"/>
            <person name="Copeland A."/>
            <person name="Lucas S."/>
            <person name="Lapidus A."/>
            <person name="Barry K."/>
            <person name="Glavina del Rio T."/>
            <person name="Dalin E."/>
            <person name="Tice H."/>
            <person name="Pitluck S."/>
            <person name="Thompson L.S."/>
            <person name="Brettin T."/>
            <person name="Bruce D."/>
            <person name="Detter J.C."/>
            <person name="Han C."/>
            <person name="Tapia R."/>
            <person name="Schmutz J."/>
            <person name="Larimer F."/>
            <person name="Land M."/>
            <person name="Hauser L."/>
            <person name="Kyrpides N."/>
            <person name="Mikhailova N."/>
            <person name="Bryant D.A."/>
            <person name="Hanada S."/>
            <person name="Tsukatani Y."/>
            <person name="Richardson P."/>
        </authorList>
    </citation>
    <scope>NUCLEOTIDE SEQUENCE [LARGE SCALE GENOMIC DNA]</scope>
    <source>
        <strain>DSM 13941 / HLO8</strain>
    </source>
</reference>
<feature type="chain" id="PRO_1000088054" description="Pyridoxal 5'-phosphate synthase subunit PdxT">
    <location>
        <begin position="1"/>
        <end position="189"/>
    </location>
</feature>
<feature type="active site" description="Nucleophile" evidence="1">
    <location>
        <position position="78"/>
    </location>
</feature>
<feature type="active site" description="Charge relay system" evidence="1">
    <location>
        <position position="173"/>
    </location>
</feature>
<feature type="active site" description="Charge relay system" evidence="1">
    <location>
        <position position="175"/>
    </location>
</feature>
<feature type="binding site" evidence="1">
    <location>
        <begin position="46"/>
        <end position="48"/>
    </location>
    <ligand>
        <name>L-glutamine</name>
        <dbReference type="ChEBI" id="CHEBI:58359"/>
    </ligand>
</feature>
<feature type="binding site" evidence="1">
    <location>
        <position position="107"/>
    </location>
    <ligand>
        <name>L-glutamine</name>
        <dbReference type="ChEBI" id="CHEBI:58359"/>
    </ligand>
</feature>
<feature type="binding site" evidence="1">
    <location>
        <begin position="136"/>
        <end position="137"/>
    </location>
    <ligand>
        <name>L-glutamine</name>
        <dbReference type="ChEBI" id="CHEBI:58359"/>
    </ligand>
</feature>
<proteinExistence type="inferred from homology"/>